<organism>
    <name type="scientific">Pseudomonas aeruginosa (strain ATCC 15692 / DSM 22644 / CIP 104116 / JCM 14847 / LMG 12228 / 1C / PRS 101 / PAO1)</name>
    <dbReference type="NCBI Taxonomy" id="208964"/>
    <lineage>
        <taxon>Bacteria</taxon>
        <taxon>Pseudomonadati</taxon>
        <taxon>Pseudomonadota</taxon>
        <taxon>Gammaproteobacteria</taxon>
        <taxon>Pseudomonadales</taxon>
        <taxon>Pseudomonadaceae</taxon>
        <taxon>Pseudomonas</taxon>
    </lineage>
</organism>
<reference key="1">
    <citation type="journal article" date="1999" name="J. Bacteriol.">
        <title>Molecular cloning, sequencing, purification, and characterization of Pseudomonas aeruginosa ribosome recycling factor.</title>
        <authorList>
            <person name="Ohnishi M."/>
            <person name="Janosi L."/>
            <person name="Shuda M."/>
            <person name="Matsumoto H."/>
            <person name="Hayashi T."/>
            <person name="Terawaki Y."/>
            <person name="Kaji A."/>
        </authorList>
    </citation>
    <scope>NUCLEOTIDE SEQUENCE [GENOMIC DNA]</scope>
    <source>
        <strain>ATCC 15692 / DSM 22644 / CIP 104116 / JCM 14847 / LMG 12228 / 1C / PRS 101 / PAO1</strain>
    </source>
</reference>
<reference key="2">
    <citation type="journal article" date="2000" name="Nature">
        <title>Complete genome sequence of Pseudomonas aeruginosa PAO1, an opportunistic pathogen.</title>
        <authorList>
            <person name="Stover C.K."/>
            <person name="Pham X.-Q.T."/>
            <person name="Erwin A.L."/>
            <person name="Mizoguchi S.D."/>
            <person name="Warrener P."/>
            <person name="Hickey M.J."/>
            <person name="Brinkman F.S.L."/>
            <person name="Hufnagle W.O."/>
            <person name="Kowalik D.J."/>
            <person name="Lagrou M."/>
            <person name="Garber R.L."/>
            <person name="Goltry L."/>
            <person name="Tolentino E."/>
            <person name="Westbrock-Wadman S."/>
            <person name="Yuan Y."/>
            <person name="Brody L.L."/>
            <person name="Coulter S.N."/>
            <person name="Folger K.R."/>
            <person name="Kas A."/>
            <person name="Larbig K."/>
            <person name="Lim R.M."/>
            <person name="Smith K.A."/>
            <person name="Spencer D.H."/>
            <person name="Wong G.K.-S."/>
            <person name="Wu Z."/>
            <person name="Paulsen I.T."/>
            <person name="Reizer J."/>
            <person name="Saier M.H. Jr."/>
            <person name="Hancock R.E.W."/>
            <person name="Lory S."/>
            <person name="Olson M.V."/>
        </authorList>
    </citation>
    <scope>NUCLEOTIDE SEQUENCE [LARGE SCALE GENOMIC DNA]</scope>
    <source>
        <strain>ATCC 15692 / DSM 22644 / CIP 104116 / JCM 14847 / LMG 12228 / 1C / PRS 101 / PAO1</strain>
    </source>
</reference>
<keyword id="KW-0002">3D-structure</keyword>
<keyword id="KW-1185">Reference proteome</keyword>
<keyword id="KW-0687">Ribonucleoprotein</keyword>
<keyword id="KW-0689">Ribosomal protein</keyword>
<name>RS2_PSEAE</name>
<evidence type="ECO:0000305" key="1"/>
<feature type="chain" id="PRO_0000134220" description="Small ribosomal subunit protein uS2">
    <location>
        <begin position="1"/>
        <end position="246"/>
    </location>
</feature>
<feature type="sequence conflict" description="In Ref. 1." evidence="1" ref="1">
    <original>GAATSADEFVEEAPAESAEG</original>
    <variation>ALPPAPTSSSRKRRPNPPKADSGTFRRPTVRRKGLGPLFATFEFLSGRPGTKVF</variation>
    <location>
        <begin position="227"/>
        <end position="246"/>
    </location>
</feature>
<accession>O82850</accession>
<gene>
    <name type="primary">rpsB</name>
    <name type="ordered locus">PA3656</name>
</gene>
<protein>
    <recommendedName>
        <fullName evidence="1">Small ribosomal subunit protein uS2</fullName>
    </recommendedName>
    <alternativeName>
        <fullName>30S ribosomal protein S2</fullName>
    </alternativeName>
</protein>
<proteinExistence type="evidence at protein level"/>
<dbReference type="EMBL" id="AB010087">
    <property type="protein sequence ID" value="BAA32342.1"/>
    <property type="molecule type" value="Genomic_DNA"/>
</dbReference>
<dbReference type="EMBL" id="AE004091">
    <property type="protein sequence ID" value="AAG07044.1"/>
    <property type="molecule type" value="Genomic_DNA"/>
</dbReference>
<dbReference type="PIR" id="C83189">
    <property type="entry name" value="C83189"/>
</dbReference>
<dbReference type="RefSeq" id="NP_252346.1">
    <property type="nucleotide sequence ID" value="NC_002516.2"/>
</dbReference>
<dbReference type="RefSeq" id="WP_003092394.1">
    <property type="nucleotide sequence ID" value="NZ_QZGE01000001.1"/>
</dbReference>
<dbReference type="PDB" id="7UNR">
    <property type="method" value="EM"/>
    <property type="resolution" value="2.90 A"/>
    <property type="chains" value="b=1-246"/>
</dbReference>
<dbReference type="PDB" id="7UNU">
    <property type="method" value="EM"/>
    <property type="resolution" value="2.90 A"/>
    <property type="chains" value="b=1-246"/>
</dbReference>
<dbReference type="PDB" id="7UNV">
    <property type="method" value="EM"/>
    <property type="resolution" value="2.70 A"/>
    <property type="chains" value="b=1-246"/>
</dbReference>
<dbReference type="PDB" id="7UNW">
    <property type="method" value="EM"/>
    <property type="resolution" value="2.60 A"/>
    <property type="chains" value="b=1-246"/>
</dbReference>
<dbReference type="PDB" id="8CD1">
    <property type="method" value="EM"/>
    <property type="resolution" value="3.00 A"/>
    <property type="chains" value="b=1-246"/>
</dbReference>
<dbReference type="PDB" id="8RWG">
    <property type="method" value="EM"/>
    <property type="resolution" value="2.46 A"/>
    <property type="chains" value="a=1-246"/>
</dbReference>
<dbReference type="PDBsum" id="7UNR"/>
<dbReference type="PDBsum" id="7UNU"/>
<dbReference type="PDBsum" id="7UNV"/>
<dbReference type="PDBsum" id="7UNW"/>
<dbReference type="PDBsum" id="8CD1"/>
<dbReference type="PDBsum" id="8RWG"/>
<dbReference type="EMDB" id="EMD-16566"/>
<dbReference type="EMDB" id="EMD-19547"/>
<dbReference type="EMDB" id="EMD-26630"/>
<dbReference type="EMDB" id="EMD-26633"/>
<dbReference type="EMDB" id="EMD-26634"/>
<dbReference type="EMDB" id="EMD-26635"/>
<dbReference type="SMR" id="O82850"/>
<dbReference type="FunCoup" id="O82850">
    <property type="interactions" value="1010"/>
</dbReference>
<dbReference type="STRING" id="208964.PA3656"/>
<dbReference type="PaxDb" id="208964-PA3656"/>
<dbReference type="DNASU" id="880593"/>
<dbReference type="GeneID" id="880593"/>
<dbReference type="KEGG" id="pae:PA3656"/>
<dbReference type="PATRIC" id="fig|208964.12.peg.3825"/>
<dbReference type="PseudoCAP" id="PA3656"/>
<dbReference type="HOGENOM" id="CLU_040318_1_0_6"/>
<dbReference type="InParanoid" id="O82850"/>
<dbReference type="OrthoDB" id="9808036at2"/>
<dbReference type="PhylomeDB" id="O82850"/>
<dbReference type="BioCyc" id="PAER208964:G1FZ6-3726-MONOMER"/>
<dbReference type="PRO" id="PR:O82850"/>
<dbReference type="Proteomes" id="UP000002438">
    <property type="component" value="Chromosome"/>
</dbReference>
<dbReference type="GO" id="GO:0022627">
    <property type="term" value="C:cytosolic small ribosomal subunit"/>
    <property type="evidence" value="ECO:0000318"/>
    <property type="project" value="GO_Central"/>
</dbReference>
<dbReference type="GO" id="GO:0003735">
    <property type="term" value="F:structural constituent of ribosome"/>
    <property type="evidence" value="ECO:0000318"/>
    <property type="project" value="GO_Central"/>
</dbReference>
<dbReference type="GO" id="GO:0006412">
    <property type="term" value="P:translation"/>
    <property type="evidence" value="ECO:0007669"/>
    <property type="project" value="UniProtKB-UniRule"/>
</dbReference>
<dbReference type="CDD" id="cd01425">
    <property type="entry name" value="RPS2"/>
    <property type="match status" value="1"/>
</dbReference>
<dbReference type="FunFam" id="1.10.287.610:FF:000001">
    <property type="entry name" value="30S ribosomal protein S2"/>
    <property type="match status" value="1"/>
</dbReference>
<dbReference type="Gene3D" id="3.40.50.10490">
    <property type="entry name" value="Glucose-6-phosphate isomerase like protein, domain 1"/>
    <property type="match status" value="1"/>
</dbReference>
<dbReference type="Gene3D" id="1.10.287.610">
    <property type="entry name" value="Helix hairpin bin"/>
    <property type="match status" value="1"/>
</dbReference>
<dbReference type="HAMAP" id="MF_00291_B">
    <property type="entry name" value="Ribosomal_uS2_B"/>
    <property type="match status" value="1"/>
</dbReference>
<dbReference type="InterPro" id="IPR001865">
    <property type="entry name" value="Ribosomal_uS2"/>
</dbReference>
<dbReference type="InterPro" id="IPR005706">
    <property type="entry name" value="Ribosomal_uS2_bac/mit/plastid"/>
</dbReference>
<dbReference type="InterPro" id="IPR018130">
    <property type="entry name" value="Ribosomal_uS2_CS"/>
</dbReference>
<dbReference type="InterPro" id="IPR023591">
    <property type="entry name" value="Ribosomal_uS2_flav_dom_sf"/>
</dbReference>
<dbReference type="NCBIfam" id="TIGR01011">
    <property type="entry name" value="rpsB_bact"/>
    <property type="match status" value="1"/>
</dbReference>
<dbReference type="PANTHER" id="PTHR12534">
    <property type="entry name" value="30S RIBOSOMAL PROTEIN S2 PROKARYOTIC AND ORGANELLAR"/>
    <property type="match status" value="1"/>
</dbReference>
<dbReference type="PANTHER" id="PTHR12534:SF0">
    <property type="entry name" value="SMALL RIBOSOMAL SUBUNIT PROTEIN US2M"/>
    <property type="match status" value="1"/>
</dbReference>
<dbReference type="Pfam" id="PF00318">
    <property type="entry name" value="Ribosomal_S2"/>
    <property type="match status" value="1"/>
</dbReference>
<dbReference type="PRINTS" id="PR00395">
    <property type="entry name" value="RIBOSOMALS2"/>
</dbReference>
<dbReference type="SUPFAM" id="SSF52313">
    <property type="entry name" value="Ribosomal protein S2"/>
    <property type="match status" value="1"/>
</dbReference>
<dbReference type="PROSITE" id="PS00962">
    <property type="entry name" value="RIBOSOMAL_S2_1"/>
    <property type="match status" value="1"/>
</dbReference>
<dbReference type="PROSITE" id="PS00963">
    <property type="entry name" value="RIBOSOMAL_S2_2"/>
    <property type="match status" value="1"/>
</dbReference>
<sequence length="246" mass="27336">MSQVNMRDMLKAGVHFGHQTRYWNPKMGKFIFGARNKIHIINLEKTLPMFNEALTFVERLAAGKNKILFVGTKRSAGKIVREEAARCGMPYVDHRWLGGMLTNYKTIRQSIKRLRDLETQSQDGTFDKLTKKEALMRSRDLEKLERSLGGIKDMGGLPDALFVIDVDHERIAITEANKLGIPVIGVVDTNSSPEGVDYVIPGNDDAIRAVQLYLNSMAEAVIRGKQGAATSADEFVEEAPAESAEG</sequence>
<comment type="similarity">
    <text evidence="1">Belongs to the universal ribosomal protein uS2 family.</text>
</comment>